<accession>P10121</accession>
<accession>Q2M7C7</accession>
<organism>
    <name type="scientific">Escherichia coli (strain K12)</name>
    <dbReference type="NCBI Taxonomy" id="83333"/>
    <lineage>
        <taxon>Bacteria</taxon>
        <taxon>Pseudomonadati</taxon>
        <taxon>Pseudomonadota</taxon>
        <taxon>Gammaproteobacteria</taxon>
        <taxon>Enterobacterales</taxon>
        <taxon>Enterobacteriaceae</taxon>
        <taxon>Escherichia</taxon>
    </lineage>
</organism>
<evidence type="ECO:0000255" key="1">
    <source>
        <dbReference type="HAMAP-Rule" id="MF_00920"/>
    </source>
</evidence>
<evidence type="ECO:0000256" key="2">
    <source>
        <dbReference type="SAM" id="MobiDB-lite"/>
    </source>
</evidence>
<evidence type="ECO:0000269" key="3">
    <source>
    </source>
</evidence>
<evidence type="ECO:0000269" key="4">
    <source>
    </source>
</evidence>
<evidence type="ECO:0000269" key="5">
    <source>
    </source>
</evidence>
<evidence type="ECO:0000269" key="6">
    <source>
    </source>
</evidence>
<evidence type="ECO:0000269" key="7">
    <source>
    </source>
</evidence>
<evidence type="ECO:0000269" key="8">
    <source>
    </source>
</evidence>
<evidence type="ECO:0000269" key="9">
    <source>
    </source>
</evidence>
<evidence type="ECO:0000269" key="10">
    <source>
    </source>
</evidence>
<evidence type="ECO:0000269" key="11">
    <source>
    </source>
</evidence>
<evidence type="ECO:0000269" key="12">
    <source>
    </source>
</evidence>
<evidence type="ECO:0000269" key="13">
    <source>
    </source>
</evidence>
<evidence type="ECO:0000269" key="14">
    <source>
    </source>
</evidence>
<evidence type="ECO:0000269" key="15">
    <source>
    </source>
</evidence>
<evidence type="ECO:0000269" key="16">
    <source>
    </source>
</evidence>
<evidence type="ECO:0000269" key="17">
    <source>
    </source>
</evidence>
<evidence type="ECO:0007829" key="18">
    <source>
        <dbReference type="PDB" id="2QY9"/>
    </source>
</evidence>
<evidence type="ECO:0007829" key="19">
    <source>
        <dbReference type="PDB" id="2YHS"/>
    </source>
</evidence>
<evidence type="ECO:0007829" key="20">
    <source>
        <dbReference type="PDB" id="6N9B"/>
    </source>
</evidence>
<gene>
    <name evidence="1" type="primary">ftsY</name>
    <name type="ordered locus">b3464</name>
    <name type="ordered locus">JW3429</name>
</gene>
<protein>
    <recommendedName>
        <fullName evidence="1">Signal recognition particle receptor FtsY</fullName>
        <shortName evidence="1">SRP receptor</shortName>
        <ecNumber evidence="1 4 7">3.6.5.4</ecNumber>
    </recommendedName>
</protein>
<keyword id="KW-0002">3D-structure</keyword>
<keyword id="KW-0997">Cell inner membrane</keyword>
<keyword id="KW-1003">Cell membrane</keyword>
<keyword id="KW-0963">Cytoplasm</keyword>
<keyword id="KW-0903">Direct protein sequencing</keyword>
<keyword id="KW-0342">GTP-binding</keyword>
<keyword id="KW-0378">Hydrolase</keyword>
<keyword id="KW-0472">Membrane</keyword>
<keyword id="KW-0547">Nucleotide-binding</keyword>
<keyword id="KW-0675">Receptor</keyword>
<keyword id="KW-1185">Reference proteome</keyword>
<dbReference type="EC" id="3.6.5.4" evidence="1 4 7"/>
<dbReference type="EMBL" id="X04398">
    <property type="protein sequence ID" value="CAA27984.1"/>
    <property type="molecule type" value="Genomic_DNA"/>
</dbReference>
<dbReference type="EMBL" id="U00039">
    <property type="protein sequence ID" value="AAB18439.1"/>
    <property type="molecule type" value="Genomic_DNA"/>
</dbReference>
<dbReference type="EMBL" id="U00096">
    <property type="protein sequence ID" value="AAC76489.1"/>
    <property type="molecule type" value="Genomic_DNA"/>
</dbReference>
<dbReference type="EMBL" id="AP009048">
    <property type="protein sequence ID" value="BAE77829.1"/>
    <property type="molecule type" value="Genomic_DNA"/>
</dbReference>
<dbReference type="PIR" id="S03130">
    <property type="entry name" value="CEECFY"/>
</dbReference>
<dbReference type="RefSeq" id="NP_417921.1">
    <property type="nucleotide sequence ID" value="NC_000913.3"/>
</dbReference>
<dbReference type="RefSeq" id="WP_001040654.1">
    <property type="nucleotide sequence ID" value="NZ_SSZK01000008.1"/>
</dbReference>
<dbReference type="PDB" id="1FTS">
    <property type="method" value="X-ray"/>
    <property type="resolution" value="2.20 A"/>
    <property type="chains" value="A=201-495"/>
</dbReference>
<dbReference type="PDB" id="2QY9">
    <property type="method" value="X-ray"/>
    <property type="resolution" value="1.90 A"/>
    <property type="chains" value="A=196-497"/>
</dbReference>
<dbReference type="PDB" id="2XXA">
    <property type="method" value="X-ray"/>
    <property type="resolution" value="3.94 A"/>
    <property type="chains" value="B/D=196-497"/>
</dbReference>
<dbReference type="PDB" id="2YHS">
    <property type="method" value="X-ray"/>
    <property type="resolution" value="1.60 A"/>
    <property type="chains" value="A=1-497"/>
</dbReference>
<dbReference type="PDB" id="3ZN8">
    <property type="method" value="EM"/>
    <property type="resolution" value="12.00 A"/>
    <property type="chains" value="D=201-495"/>
</dbReference>
<dbReference type="PDB" id="4C7O">
    <property type="method" value="X-ray"/>
    <property type="resolution" value="2.60 A"/>
    <property type="chains" value="B/D=224-497"/>
</dbReference>
<dbReference type="PDB" id="5GAD">
    <property type="method" value="EM"/>
    <property type="resolution" value="3.70 A"/>
    <property type="chains" value="l=1-497"/>
</dbReference>
<dbReference type="PDB" id="5NCO">
    <property type="method" value="EM"/>
    <property type="resolution" value="4.80 A"/>
    <property type="chains" value="l=224-494"/>
</dbReference>
<dbReference type="PDB" id="5NIY">
    <property type="method" value="X-ray"/>
    <property type="resolution" value="1.70 A"/>
    <property type="chains" value="A=195-497"/>
</dbReference>
<dbReference type="PDB" id="6CQP">
    <property type="method" value="X-ray"/>
    <property type="resolution" value="1.45 A"/>
    <property type="chains" value="A/B=196-497"/>
</dbReference>
<dbReference type="PDB" id="6CS8">
    <property type="method" value="X-ray"/>
    <property type="resolution" value="1.75 A"/>
    <property type="chains" value="A/B=196-497"/>
</dbReference>
<dbReference type="PDB" id="6CVD">
    <property type="method" value="X-ray"/>
    <property type="resolution" value="1.78 A"/>
    <property type="chains" value="A/B=196-497"/>
</dbReference>
<dbReference type="PDB" id="6DLX">
    <property type="method" value="X-ray"/>
    <property type="resolution" value="1.85 A"/>
    <property type="chains" value="A/B=196-497"/>
</dbReference>
<dbReference type="PDB" id="6FPK">
    <property type="method" value="X-ray"/>
    <property type="resolution" value="1.95 A"/>
    <property type="chains" value="A=221-280"/>
</dbReference>
<dbReference type="PDB" id="6FPR">
    <property type="method" value="X-ray"/>
    <property type="resolution" value="2.65 A"/>
    <property type="chains" value="A/B=221-280"/>
</dbReference>
<dbReference type="PDB" id="6FQD">
    <property type="method" value="X-ray"/>
    <property type="resolution" value="2.10 A"/>
    <property type="chains" value="A/B=221-497"/>
</dbReference>
<dbReference type="PDB" id="6N5I">
    <property type="method" value="X-ray"/>
    <property type="resolution" value="1.50 A"/>
    <property type="chains" value="A/B=196-497"/>
</dbReference>
<dbReference type="PDB" id="6N5J">
    <property type="method" value="X-ray"/>
    <property type="resolution" value="1.37 A"/>
    <property type="chains" value="A/B=196-497"/>
</dbReference>
<dbReference type="PDB" id="6N6N">
    <property type="method" value="X-ray"/>
    <property type="resolution" value="1.88 A"/>
    <property type="chains" value="A/B=196-497"/>
</dbReference>
<dbReference type="PDB" id="6N9B">
    <property type="method" value="X-ray"/>
    <property type="resolution" value="1.22 A"/>
    <property type="chains" value="A/B=196-497"/>
</dbReference>
<dbReference type="PDB" id="6NC1">
    <property type="method" value="X-ray"/>
    <property type="resolution" value="1.60 A"/>
    <property type="chains" value="A/B=196-497"/>
</dbReference>
<dbReference type="PDB" id="6NC4">
    <property type="method" value="X-ray"/>
    <property type="resolution" value="1.60 A"/>
    <property type="chains" value="A/B=196-497"/>
</dbReference>
<dbReference type="PDB" id="7O9H">
    <property type="method" value="X-ray"/>
    <property type="resolution" value="2.40 A"/>
    <property type="chains" value="A/B=194-497"/>
</dbReference>
<dbReference type="PDBsum" id="1FTS"/>
<dbReference type="PDBsum" id="2QY9"/>
<dbReference type="PDBsum" id="2XXA"/>
<dbReference type="PDBsum" id="2YHS"/>
<dbReference type="PDBsum" id="3ZN8"/>
<dbReference type="PDBsum" id="4C7O"/>
<dbReference type="PDBsum" id="5GAD"/>
<dbReference type="PDBsum" id="5NCO"/>
<dbReference type="PDBsum" id="5NIY"/>
<dbReference type="PDBsum" id="6CQP"/>
<dbReference type="PDBsum" id="6CS8"/>
<dbReference type="PDBsum" id="6CVD"/>
<dbReference type="PDBsum" id="6DLX"/>
<dbReference type="PDBsum" id="6FPK"/>
<dbReference type="PDBsum" id="6FPR"/>
<dbReference type="PDBsum" id="6FQD"/>
<dbReference type="PDBsum" id="6N5I"/>
<dbReference type="PDBsum" id="6N5J"/>
<dbReference type="PDBsum" id="6N6N"/>
<dbReference type="PDBsum" id="6N9B"/>
<dbReference type="PDBsum" id="6NC1"/>
<dbReference type="PDBsum" id="6NC4"/>
<dbReference type="PDBsum" id="7O9H"/>
<dbReference type="EMDB" id="EMD-2316"/>
<dbReference type="EMDB" id="EMD-3617"/>
<dbReference type="EMDB" id="EMD-8000"/>
<dbReference type="SMR" id="P10121"/>
<dbReference type="BioGRID" id="4262499">
    <property type="interactions" value="600"/>
</dbReference>
<dbReference type="BioGRID" id="852287">
    <property type="interactions" value="1"/>
</dbReference>
<dbReference type="DIP" id="DIP-9709N"/>
<dbReference type="FunCoup" id="P10121">
    <property type="interactions" value="794"/>
</dbReference>
<dbReference type="IntAct" id="P10121">
    <property type="interactions" value="8"/>
</dbReference>
<dbReference type="STRING" id="511145.b3464"/>
<dbReference type="TCDB" id="3.A.5.1.1">
    <property type="family name" value="the general secretory pathway (sec) family"/>
</dbReference>
<dbReference type="jPOST" id="P10121"/>
<dbReference type="PaxDb" id="511145-b3464"/>
<dbReference type="EnsemblBacteria" id="AAC76489">
    <property type="protein sequence ID" value="AAC76489"/>
    <property type="gene ID" value="b3464"/>
</dbReference>
<dbReference type="GeneID" id="947978"/>
<dbReference type="KEGG" id="ecj:JW3429"/>
<dbReference type="KEGG" id="eco:b3464"/>
<dbReference type="KEGG" id="ecoc:C3026_18765"/>
<dbReference type="PATRIC" id="fig|1411691.4.peg.3261"/>
<dbReference type="EchoBASE" id="EB0342"/>
<dbReference type="eggNOG" id="COG0552">
    <property type="taxonomic scope" value="Bacteria"/>
</dbReference>
<dbReference type="HOGENOM" id="CLU_009301_0_0_6"/>
<dbReference type="InParanoid" id="P10121"/>
<dbReference type="OMA" id="AMPYEGK"/>
<dbReference type="OrthoDB" id="9804720at2"/>
<dbReference type="PhylomeDB" id="P10121"/>
<dbReference type="BioCyc" id="EcoCyc:EG10346-MONOMER"/>
<dbReference type="BRENDA" id="3.6.5.4">
    <property type="organism ID" value="2026"/>
</dbReference>
<dbReference type="EvolutionaryTrace" id="P10121"/>
<dbReference type="PRO" id="PR:P10121"/>
<dbReference type="Proteomes" id="UP000000625">
    <property type="component" value="Chromosome"/>
</dbReference>
<dbReference type="GO" id="GO:0009898">
    <property type="term" value="C:cytoplasmic side of plasma membrane"/>
    <property type="evidence" value="ECO:0000314"/>
    <property type="project" value="EcoCyc"/>
</dbReference>
<dbReference type="GO" id="GO:0005829">
    <property type="term" value="C:cytosol"/>
    <property type="evidence" value="ECO:0000314"/>
    <property type="project" value="EcoCyc"/>
</dbReference>
<dbReference type="GO" id="GO:0005886">
    <property type="term" value="C:plasma membrane"/>
    <property type="evidence" value="ECO:0000314"/>
    <property type="project" value="EcoCyc"/>
</dbReference>
<dbReference type="GO" id="GO:0016887">
    <property type="term" value="F:ATP hydrolysis activity"/>
    <property type="evidence" value="ECO:0007669"/>
    <property type="project" value="InterPro"/>
</dbReference>
<dbReference type="GO" id="GO:0005525">
    <property type="term" value="F:GTP binding"/>
    <property type="evidence" value="ECO:0007669"/>
    <property type="project" value="UniProtKB-UniRule"/>
</dbReference>
<dbReference type="GO" id="GO:0003924">
    <property type="term" value="F:GTPase activity"/>
    <property type="evidence" value="ECO:0000314"/>
    <property type="project" value="EcoCyc"/>
</dbReference>
<dbReference type="GO" id="GO:0042803">
    <property type="term" value="F:protein homodimerization activity"/>
    <property type="evidence" value="ECO:0000314"/>
    <property type="project" value="EcoCyc"/>
</dbReference>
<dbReference type="GO" id="GO:0005047">
    <property type="term" value="F:signal recognition particle binding"/>
    <property type="evidence" value="ECO:0000318"/>
    <property type="project" value="GO_Central"/>
</dbReference>
<dbReference type="GO" id="GO:0006605">
    <property type="term" value="P:protein targeting"/>
    <property type="evidence" value="ECO:0000318"/>
    <property type="project" value="GO_Central"/>
</dbReference>
<dbReference type="GO" id="GO:0006614">
    <property type="term" value="P:SRP-dependent cotranslational protein targeting to membrane"/>
    <property type="evidence" value="ECO:0000314"/>
    <property type="project" value="EcoCyc"/>
</dbReference>
<dbReference type="GO" id="GO:0015968">
    <property type="term" value="P:stringent response"/>
    <property type="evidence" value="ECO:0000314"/>
    <property type="project" value="EcoCyc"/>
</dbReference>
<dbReference type="CDD" id="cd17874">
    <property type="entry name" value="FtsY"/>
    <property type="match status" value="1"/>
</dbReference>
<dbReference type="DisProt" id="DP00896"/>
<dbReference type="FunFam" id="1.20.120.140:FF:000002">
    <property type="entry name" value="Signal recognition particle receptor FtsY"/>
    <property type="match status" value="1"/>
</dbReference>
<dbReference type="FunFam" id="3.40.50.300:FF:000053">
    <property type="entry name" value="Signal recognition particle receptor FtsY"/>
    <property type="match status" value="1"/>
</dbReference>
<dbReference type="Gene3D" id="3.40.50.300">
    <property type="entry name" value="P-loop containing nucleotide triphosphate hydrolases"/>
    <property type="match status" value="1"/>
</dbReference>
<dbReference type="Gene3D" id="1.20.120.140">
    <property type="entry name" value="Signal recognition particle SRP54, nucleotide-binding domain"/>
    <property type="match status" value="1"/>
</dbReference>
<dbReference type="HAMAP" id="MF_00920">
    <property type="entry name" value="FtsY"/>
    <property type="match status" value="1"/>
</dbReference>
<dbReference type="InterPro" id="IPR003593">
    <property type="entry name" value="AAA+_ATPase"/>
</dbReference>
<dbReference type="InterPro" id="IPR027417">
    <property type="entry name" value="P-loop_NTPase"/>
</dbReference>
<dbReference type="InterPro" id="IPR013822">
    <property type="entry name" value="Signal_recog_particl_SRP54_hlx"/>
</dbReference>
<dbReference type="InterPro" id="IPR004390">
    <property type="entry name" value="SR_rcpt_FtsY"/>
</dbReference>
<dbReference type="InterPro" id="IPR036225">
    <property type="entry name" value="SRP/SRP_N"/>
</dbReference>
<dbReference type="InterPro" id="IPR000897">
    <property type="entry name" value="SRP54_GTPase_dom"/>
</dbReference>
<dbReference type="InterPro" id="IPR042101">
    <property type="entry name" value="SRP54_N_sf"/>
</dbReference>
<dbReference type="NCBIfam" id="TIGR00064">
    <property type="entry name" value="ftsY"/>
    <property type="match status" value="1"/>
</dbReference>
<dbReference type="PANTHER" id="PTHR43134">
    <property type="entry name" value="SIGNAL RECOGNITION PARTICLE RECEPTOR SUBUNIT ALPHA"/>
    <property type="match status" value="1"/>
</dbReference>
<dbReference type="PANTHER" id="PTHR43134:SF1">
    <property type="entry name" value="SIGNAL RECOGNITION PARTICLE RECEPTOR SUBUNIT ALPHA"/>
    <property type="match status" value="1"/>
</dbReference>
<dbReference type="Pfam" id="PF00448">
    <property type="entry name" value="SRP54"/>
    <property type="match status" value="1"/>
</dbReference>
<dbReference type="Pfam" id="PF02881">
    <property type="entry name" value="SRP54_N"/>
    <property type="match status" value="1"/>
</dbReference>
<dbReference type="SMART" id="SM00382">
    <property type="entry name" value="AAA"/>
    <property type="match status" value="1"/>
</dbReference>
<dbReference type="SMART" id="SM00962">
    <property type="entry name" value="SRP54"/>
    <property type="match status" value="1"/>
</dbReference>
<dbReference type="SMART" id="SM00963">
    <property type="entry name" value="SRP54_N"/>
    <property type="match status" value="1"/>
</dbReference>
<dbReference type="SUPFAM" id="SSF47364">
    <property type="entry name" value="Domain of the SRP/SRP receptor G-proteins"/>
    <property type="match status" value="1"/>
</dbReference>
<dbReference type="SUPFAM" id="SSF52540">
    <property type="entry name" value="P-loop containing nucleoside triphosphate hydrolases"/>
    <property type="match status" value="1"/>
</dbReference>
<dbReference type="PROSITE" id="PS00300">
    <property type="entry name" value="SRP54"/>
    <property type="match status" value="1"/>
</dbReference>
<feature type="initiator methionine" description="Removed" evidence="10">
    <location>
        <position position="1"/>
    </location>
</feature>
<feature type="chain" id="PRO_0000101131" description="Signal recognition particle receptor FtsY">
    <location>
        <begin position="2"/>
        <end position="497"/>
    </location>
</feature>
<feature type="region of interest" description="Disordered" evidence="2">
    <location>
        <begin position="1"/>
        <end position="63"/>
    </location>
</feature>
<feature type="region of interest" description="Disordered" evidence="2">
    <location>
        <begin position="79"/>
        <end position="130"/>
    </location>
</feature>
<feature type="compositionally biased region" description="Low complexity" evidence="2">
    <location>
        <begin position="87"/>
        <end position="96"/>
    </location>
</feature>
<feature type="binding site" evidence="1">
    <location>
        <begin position="300"/>
        <end position="307"/>
    </location>
    <ligand>
        <name>GTP</name>
        <dbReference type="ChEBI" id="CHEBI:37565"/>
    </ligand>
</feature>
<feature type="binding site" evidence="1">
    <location>
        <begin position="382"/>
        <end position="386"/>
    </location>
    <ligand>
        <name>GTP</name>
        <dbReference type="ChEBI" id="CHEBI:37565"/>
    </ligand>
</feature>
<feature type="binding site" evidence="1">
    <location>
        <begin position="446"/>
        <end position="449"/>
    </location>
    <ligand>
        <name>GTP</name>
        <dbReference type="ChEBI" id="CHEBI:37565"/>
    </ligand>
</feature>
<feature type="site" description="Cleavage" evidence="10">
    <location>
        <begin position="14"/>
        <end position="15"/>
    </location>
</feature>
<feature type="mutagenesis site" description="Blocks proteolytic cleavage and impairs activity in cotranslational targeting." evidence="10">
    <original>G</original>
    <variation>A</variation>
    <location>
        <position position="14"/>
    </location>
</feature>
<feature type="helix" evidence="20">
    <location>
        <begin position="197"/>
        <end position="202"/>
    </location>
</feature>
<feature type="helix" evidence="20">
    <location>
        <begin position="204"/>
        <end position="207"/>
    </location>
</feature>
<feature type="helix" evidence="20">
    <location>
        <begin position="211"/>
        <end position="213"/>
    </location>
</feature>
<feature type="helix" evidence="20">
    <location>
        <begin position="214"/>
        <end position="218"/>
    </location>
</feature>
<feature type="helix" evidence="20">
    <location>
        <begin position="225"/>
        <end position="237"/>
    </location>
</feature>
<feature type="helix" evidence="20">
    <location>
        <begin position="242"/>
        <end position="258"/>
    </location>
</feature>
<feature type="helix" evidence="20">
    <location>
        <begin position="264"/>
        <end position="266"/>
    </location>
</feature>
<feature type="helix" evidence="20">
    <location>
        <begin position="267"/>
        <end position="280"/>
    </location>
</feature>
<feature type="strand" evidence="20">
    <location>
        <begin position="294"/>
        <end position="300"/>
    </location>
</feature>
<feature type="helix" evidence="20">
    <location>
        <begin position="306"/>
        <end position="319"/>
    </location>
</feature>
<feature type="strand" evidence="20">
    <location>
        <begin position="324"/>
        <end position="327"/>
    </location>
</feature>
<feature type="helix" evidence="20">
    <location>
        <begin position="334"/>
        <end position="347"/>
    </location>
</feature>
<feature type="helix" evidence="20">
    <location>
        <begin position="360"/>
        <end position="373"/>
    </location>
</feature>
<feature type="strand" evidence="20">
    <location>
        <begin position="377"/>
        <end position="381"/>
    </location>
</feature>
<feature type="helix" evidence="18">
    <location>
        <begin position="387"/>
        <end position="389"/>
    </location>
</feature>
<feature type="helix" evidence="20">
    <location>
        <begin position="390"/>
        <end position="404"/>
    </location>
</feature>
<feature type="turn" evidence="20">
    <location>
        <begin position="405"/>
        <end position="407"/>
    </location>
</feature>
<feature type="strand" evidence="20">
    <location>
        <begin position="412"/>
        <end position="420"/>
    </location>
</feature>
<feature type="helix" evidence="20">
    <location>
        <begin position="421"/>
        <end position="424"/>
    </location>
</feature>
<feature type="helix" evidence="20">
    <location>
        <begin position="425"/>
        <end position="437"/>
    </location>
</feature>
<feature type="strand" evidence="20">
    <location>
        <begin position="441"/>
        <end position="446"/>
    </location>
</feature>
<feature type="helix" evidence="19">
    <location>
        <begin position="448"/>
        <end position="450"/>
    </location>
</feature>
<feature type="turn" evidence="20">
    <location>
        <begin position="452"/>
        <end position="455"/>
    </location>
</feature>
<feature type="helix" evidence="20">
    <location>
        <begin position="456"/>
        <end position="464"/>
    </location>
</feature>
<feature type="strand" evidence="20">
    <location>
        <begin position="468"/>
        <end position="472"/>
    </location>
</feature>
<feature type="strand" evidence="20">
    <location>
        <begin position="474"/>
        <end position="476"/>
    </location>
</feature>
<feature type="helix" evidence="20">
    <location>
        <begin position="477"/>
        <end position="479"/>
    </location>
</feature>
<feature type="strand" evidence="20">
    <location>
        <begin position="480"/>
        <end position="482"/>
    </location>
</feature>
<feature type="helix" evidence="20">
    <location>
        <begin position="485"/>
        <end position="493"/>
    </location>
</feature>
<proteinExistence type="evidence at protein level"/>
<reference key="1">
    <citation type="journal article" date="1986" name="Mol. Gen. Genet.">
        <title>A new cell division operon in Escherichia coli.</title>
        <authorList>
            <person name="Gill D.R."/>
            <person name="Hatfull G.F."/>
            <person name="Salmond G.P.C."/>
        </authorList>
    </citation>
    <scope>NUCLEOTIDE SEQUENCE [GENOMIC DNA]</scope>
    <source>
        <strain>K12</strain>
    </source>
</reference>
<reference key="2">
    <citation type="journal article" date="1994" name="Nucleic Acids Res.">
        <title>Analysis of the Escherichia coli genome. V. DNA sequence of the region from 76.0 to 81.5 minutes.</title>
        <authorList>
            <person name="Sofia H.J."/>
            <person name="Burland V."/>
            <person name="Daniels D.L."/>
            <person name="Plunkett G. III"/>
            <person name="Blattner F.R."/>
        </authorList>
    </citation>
    <scope>NUCLEOTIDE SEQUENCE [LARGE SCALE GENOMIC DNA]</scope>
    <source>
        <strain>K12 / MG1655 / ATCC 47076</strain>
    </source>
</reference>
<reference key="3">
    <citation type="journal article" date="1997" name="Science">
        <title>The complete genome sequence of Escherichia coli K-12.</title>
        <authorList>
            <person name="Blattner F.R."/>
            <person name="Plunkett G. III"/>
            <person name="Bloch C.A."/>
            <person name="Perna N.T."/>
            <person name="Burland V."/>
            <person name="Riley M."/>
            <person name="Collado-Vides J."/>
            <person name="Glasner J.D."/>
            <person name="Rode C.K."/>
            <person name="Mayhew G.F."/>
            <person name="Gregor J."/>
            <person name="Davis N.W."/>
            <person name="Kirkpatrick H.A."/>
            <person name="Goeden M.A."/>
            <person name="Rose D.J."/>
            <person name="Mau B."/>
            <person name="Shao Y."/>
        </authorList>
    </citation>
    <scope>NUCLEOTIDE SEQUENCE [LARGE SCALE GENOMIC DNA]</scope>
    <source>
        <strain>K12 / MG1655 / ATCC 47076</strain>
    </source>
</reference>
<reference key="4">
    <citation type="journal article" date="2006" name="Mol. Syst. Biol.">
        <title>Highly accurate genome sequences of Escherichia coli K-12 strains MG1655 and W3110.</title>
        <authorList>
            <person name="Hayashi K."/>
            <person name="Morooka N."/>
            <person name="Yamamoto Y."/>
            <person name="Fujita K."/>
            <person name="Isono K."/>
            <person name="Choi S."/>
            <person name="Ohtsubo E."/>
            <person name="Baba T."/>
            <person name="Wanner B.L."/>
            <person name="Mori H."/>
            <person name="Horiuchi T."/>
        </authorList>
    </citation>
    <scope>NUCLEOTIDE SEQUENCE [LARGE SCALE GENOMIC DNA]</scope>
    <source>
        <strain>K12 / W3110 / ATCC 27325 / DSM 5911</strain>
    </source>
</reference>
<reference key="5">
    <citation type="journal article" date="2008" name="J. Mol. Biol.">
        <title>A cleavable N-terminal membrane anchor is involved in membrane binding of the Escherichia coli SRP receptor.</title>
        <authorList>
            <person name="Weiche B."/>
            <person name="Burk J."/>
            <person name="Angelini S."/>
            <person name="Schiltz E."/>
            <person name="Thumfart J.O."/>
            <person name="Koch H.G."/>
        </authorList>
    </citation>
    <scope>PROTEIN SEQUENCE OF 2-11 AND 15-25</scope>
    <scope>SUBCELLULAR LOCATION</scope>
    <scope>DOMAIN</scope>
    <scope>CLEAVAGE</scope>
    <scope>MUTAGENESIS OF GLY-14</scope>
</reference>
<reference key="6">
    <citation type="journal article" date="1990" name="Mol. Microbiol.">
        <title>The identification of the Escherichia coli ftsY gene product: an unusual protein.</title>
        <authorList>
            <person name="Gill D.R."/>
            <person name="Salmond G.P.C."/>
        </authorList>
    </citation>
    <scope>CHARACTERIZATION</scope>
</reference>
<reference key="7">
    <citation type="journal article" date="1994" name="EMBO J.">
        <title>An alternative protein targeting pathway in Escherichia coli: studies on the role of FtsY.</title>
        <authorList>
            <person name="Luirink J."/>
            <person name="ten Hagen-Jongman C.M."/>
            <person name="van der Weijden C.C."/>
            <person name="Oudega B."/>
            <person name="High S."/>
            <person name="Dobberstein B."/>
            <person name="Kusters R."/>
        </authorList>
    </citation>
    <scope>FUNCTION</scope>
    <scope>SUBCELLULAR LOCATION</scope>
    <scope>DISRUPTION PHENOTYPE</scope>
</reference>
<reference key="8">
    <citation type="journal article" date="1997" name="EMBO J.">
        <title>Co-translational protein targeting catalyzed by the Escherichia coli signal recognition particle and its receptor.</title>
        <authorList>
            <person name="Powers T."/>
            <person name="Walter P."/>
        </authorList>
    </citation>
    <scope>FUNCTION</scope>
    <scope>SUBUNIT</scope>
    <scope>DOMAIN</scope>
</reference>
<reference key="9">
    <citation type="journal article" date="1997" name="Proc. Natl. Acad. Sci. U.S.A.">
        <title>The NG domain of the prokaryotic signal recognition particle receptor, FtsY, is fully functional when fused to an unrelated integral membrane polypeptide.</title>
        <authorList>
            <person name="Zelazny A."/>
            <person name="Seluanov A."/>
            <person name="Cooper A."/>
            <person name="Bibi E."/>
        </authorList>
    </citation>
    <scope>SUBCELLULAR LOCATION</scope>
    <scope>DOMAIN</scope>
</reference>
<reference key="10">
    <citation type="journal article" date="2001" name="Biochemistry">
        <title>Role of SRP RNA in the GTPase cycles of Ffh and FtsY.</title>
        <authorList>
            <person name="Peluso P."/>
            <person name="Shan S.O."/>
            <person name="Nock S."/>
            <person name="Herschlag D."/>
            <person name="Walter P."/>
        </authorList>
    </citation>
    <scope>FUNCTION</scope>
    <scope>CATALYTIC ACTIVITY</scope>
    <scope>ACTIVITY REGULATION</scope>
</reference>
<reference key="11">
    <citation type="journal article" date="2001" name="J. Biol. Chem.">
        <title>FtsY binds to the Escherichia coli inner membrane via interactions with phosphatidylethanolamine and membrane proteins.</title>
        <authorList>
            <person name="Millman J.S."/>
            <person name="Qi H.Y."/>
            <person name="Vulcu F."/>
            <person name="Bernstein H.D."/>
            <person name="Andrews D.W."/>
        </authorList>
    </citation>
    <scope>SUBCELLULAR LOCATION</scope>
</reference>
<reference key="12">
    <citation type="journal article" date="2002" name="J. Bacteriol.">
        <title>Genetic screen yields mutations in genes encoding all known components of the Escherichia coli signal recognition particle pathway.</title>
        <authorList>
            <person name="Tian H."/>
            <person name="Beckwith J."/>
        </authorList>
    </citation>
    <scope>FUNCTION</scope>
    <scope>DISRUPTION PHENOTYPE</scope>
    <source>
        <strain>K12</strain>
    </source>
</reference>
<reference key="13">
    <citation type="journal article" date="2004" name="Proc. Natl. Acad. Sci. U.S.A.">
        <title>Trigger factor binds to ribosome-signal-recognition particle (SRP) complexes and is excluded by binding of the SRP receptor.</title>
        <authorList>
            <person name="Buskiewicz I."/>
            <person name="Deuerling E."/>
            <person name="Gu S.-Q."/>
            <person name="Joeckel J."/>
            <person name="Rodnina M.V."/>
            <person name="Bukau B."/>
            <person name="Wintermeyer W."/>
        </authorList>
    </citation>
    <scope>FUNCTION</scope>
    <scope>BINDING OF FTSY AND SRP TO THE RIBOSOME</scope>
    <source>
        <strain>MRE-600</strain>
    </source>
</reference>
<reference key="14">
    <citation type="journal article" date="2007" name="J. Biol. Chem.">
        <title>Membrane targeting of ribosomes and their release require distinct and separable functions of FtsY.</title>
        <authorList>
            <person name="Bahari L."/>
            <person name="Parlitz R."/>
            <person name="Eitan A."/>
            <person name="Stjepanovic G."/>
            <person name="Bochkareva E.S."/>
            <person name="Sinning I."/>
            <person name="Bibi E."/>
        </authorList>
    </citation>
    <scope>SUBCELLULAR LOCATION</scope>
    <scope>DOMAIN</scope>
</reference>
<reference key="15">
    <citation type="journal article" date="2007" name="J. Cell Biol.">
        <title>Conformational changes in the GTPase modules of the signal reception particle and its receptor drive initiation of protein translocation.</title>
        <authorList>
            <person name="Shan S.O."/>
            <person name="Chandrasekar S."/>
            <person name="Walter P."/>
        </authorList>
    </citation>
    <scope>FUNCTION</scope>
    <scope>CATALYTIC ACTIVITY</scope>
</reference>
<reference key="16">
    <citation type="journal article" date="2009" name="J. Mol. Biol.">
        <title>Two cooperating helices constitute the lipid-binding domain of the bacterial SRP receptor.</title>
        <authorList>
            <person name="Braig D."/>
            <person name="Bar C."/>
            <person name="Thumfart J.O."/>
            <person name="Koch H.G."/>
        </authorList>
    </citation>
    <scope>DOMAIN</scope>
    <scope>LIPID-BINDING SITES</scope>
    <scope>SUBCELLULAR LOCATION</scope>
</reference>
<reference key="17">
    <citation type="journal article" date="2011" name="Traffic">
        <title>The bacterial SRP receptor, SecA and the ribosome use overlapping binding sites on the SecY translocon.</title>
        <authorList>
            <person name="Kuhn P."/>
            <person name="Weiche B."/>
            <person name="Sturm L."/>
            <person name="Sommer E."/>
            <person name="Drepper F."/>
            <person name="Warscheid B."/>
            <person name="Sourjik V."/>
            <person name="Koch H.G."/>
        </authorList>
    </citation>
    <scope>INTERACTION WITH SECY</scope>
</reference>
<reference key="18">
    <citation type="journal article" date="2011" name="Biochim. Biophys. Acta">
        <title>Early targeting events during membrane protein biogenesis in Escherichia coli.</title>
        <authorList>
            <person name="Bibi E."/>
        </authorList>
    </citation>
    <scope>REVIEW</scope>
</reference>
<reference key="19">
    <citation type="journal article" date="1997" name="Nature">
        <title>Crystal structure of the NG domain from the signal-recognition particle receptor FtsY.</title>
        <authorList>
            <person name="Montoya G."/>
            <person name="Svensson C."/>
            <person name="Luirink J."/>
            <person name="Sinning I."/>
        </authorList>
    </citation>
    <scope>X-RAY CRYSTALLOGRAPHY (2.2 ANGSTROMS) OF 201-495</scope>
    <scope>DOMAIN</scope>
</reference>
<reference key="20">
    <citation type="journal article" date="2007" name="J. Biol. Chem.">
        <title>Escherichia coli signal recognition particle receptor FtsY contains an essential and autonomous membrane-binding amphipathic helix.</title>
        <authorList>
            <person name="Parlitz R."/>
            <person name="Eitan A."/>
            <person name="Stjepanovic G."/>
            <person name="Bahari L."/>
            <person name="Bange G."/>
            <person name="Bibi E."/>
            <person name="Sinning I."/>
        </authorList>
    </citation>
    <scope>X-RAY CRYSTALLOGRAPHY (1.9 ANGSTROMS) OF 196-497</scope>
    <scope>DOMAIN</scope>
</reference>
<reference key="21">
    <citation type="journal article" date="2011" name="J. Biol. Chem.">
        <title>Lipids trigger a conformational switch that regulates signal recognition particle (SRP)-mediated protein targeting.</title>
        <authorList>
            <person name="Stjepanovic G."/>
            <person name="Kapp K."/>
            <person name="Bange G."/>
            <person name="Graf C."/>
            <person name="Parlitz R."/>
            <person name="Wild K."/>
            <person name="Mayer M.P."/>
            <person name="Sinning I."/>
        </authorList>
    </citation>
    <scope>X-RAY CRYSTALLOGRAPHY (1.6 ANGSTROMS)</scope>
    <scope>SUBCELLULAR LOCATION</scope>
</reference>
<reference key="22">
    <citation type="journal article" date="2011" name="Science">
        <title>The crystal structure of the signal recognition particle in complex with its receptor.</title>
        <authorList>
            <person name="Ataide S.F."/>
            <person name="Schmitz N."/>
            <person name="Shen K."/>
            <person name="Ke A."/>
            <person name="Shan S.O."/>
            <person name="Doudna J.A."/>
            <person name="Ban N."/>
        </authorList>
    </citation>
    <scope>X-RAY CRYSTALLOGRAPHY (3.94 ANGSTROMS) OF 196-497 IN COMPLEX WITH SRP</scope>
</reference>
<name>FTSY_ECOLI</name>
<sequence length="497" mass="54513">MAKEKKRGFFSWLGFGQKEQTPEKETEVQNEQPVVEEIVQAQEPVKASEQAVEEQPQAHTEAEAETFAADVVEVTEQVAESEKAQPEAEVVAQPEPVVEETPEPVAIEREELPLPEDVNAEAVSPEEWQAEAETVEIVEAAEEEAAKEEITDEELETALAAEAAEEAVMVVPPAEEEQPVEEIAQEQEKPTKEGFFARLKRSLLKTKENLGSGFISLFRGKKIDDDLFEELEEQLLIADVGVETTRKIITNLTEGASRKQLRDAEALYGLLKEEMGEILAKVDEPLNVEGKAPFVILMVGVNGVGKTTTIGKLARQFEQQGKSVMLAAGDTFRAAAVEQLQVWGQRNNIPVIAQHTGADSASVIFDAIQAAKARNIDVLIADTAGRLQNKSHLMEELKKIVRVMKKLDVEAPHEVMLTIDASTGQNAVSQAKLFHEAVGLTGITLTKLDGTAKGGVIFSVADQFGIPIRYIGVGERIEDLRPFKADDFIEALFARED</sequence>
<comment type="function">
    <text evidence="1 4 5 6 7 14 17">Involved in targeting and insertion of nascent membrane proteins into the cytoplasmic membrane. Acts as a receptor for the complex formed by the signal recognition particle (SRP) and the ribosome-nascent chain (RNC). Interaction with SRP-RNC leads to the transfer of the RNC complex to the Sec translocase for insertion into the membrane, the hydrolysis of GTP by both Ffh and FtsY, and the dissociation of the SRP-FtsY complex into the individual components.</text>
</comment>
<comment type="catalytic activity">
    <reaction evidence="1 4 7">
        <text>GTP + H2O = GDP + phosphate + H(+)</text>
        <dbReference type="Rhea" id="RHEA:19669"/>
        <dbReference type="ChEBI" id="CHEBI:15377"/>
        <dbReference type="ChEBI" id="CHEBI:15378"/>
        <dbReference type="ChEBI" id="CHEBI:37565"/>
        <dbReference type="ChEBI" id="CHEBI:43474"/>
        <dbReference type="ChEBI" id="CHEBI:58189"/>
        <dbReference type="EC" id="3.6.5.4"/>
    </reaction>
</comment>
<comment type="activity regulation">
    <text evidence="4">Conformation of the Ffh-FtsY complex and regulation of its GTPase activity are modulated by the 4.5S RNA. Formation of the FfH-FtsY complex leads to a mutual stimulation of both GTPases.</text>
</comment>
<comment type="subunit">
    <text evidence="1 12 17">Part of the signal recognition particle protein translocation system, which is composed of SRP and FtsY. SRP is a ribonucleoprotein composed of Ffh and a 4.5S RNA molecule. Binds to SecY.</text>
</comment>
<comment type="interaction">
    <interactant intactId="EBI-549067">
        <id>P10121</id>
    </interactant>
    <interactant intactId="EBI-369938">
        <id>P0AGD7</id>
        <label>ffh</label>
    </interactant>
    <organismsDiffer>false</organismsDiffer>
    <experiments>10</experiments>
</comment>
<comment type="subcellular location">
    <subcellularLocation>
        <location evidence="3 9 10 11 13 14 16">Cell inner membrane</location>
        <topology evidence="3 9 10 11 13 14 16">Peripheral membrane protein</topology>
        <orientation evidence="3 9 10 11 13 14 16">Cytoplasmic side</orientation>
    </subcellularLocation>
    <subcellularLocation>
        <location evidence="10 14">Cytoplasm</location>
    </subcellularLocation>
    <text evidence="3 10 11 14 16">Distributed between the membrane and the cytoplasm (PubMed:18281057, PubMed:8194520). Binding to the membrane probably occurs initially through phospholipid binding, which allows a strong membrane contact, followed by interaction with a membrane protein (PubMed:11353766). Targeting of FtsY to the membrane is essential for proper function (PubMed:9177162). The stability of this membrane contact may be regulated by cleavage of helix 1 (PubMed:19414018).</text>
</comment>
<comment type="domain">
    <text evidence="1 8 9 10 11 15 16 17">Contains an acidic N-terminal A domain, a central N domain and a C-terminal GTPase G domain that can bind and hydrolyze GTP. Contains at least two lipid-binding sites. The first site contains the first 14 amino acids (helix 1) and the second binding site is an amphipathic alpha-helix located at the interface between the A- and the N-domain (helix 2).</text>
</comment>
<comment type="PTM">
    <text evidence="10">Proteolytically cleaved. The cleavage may regulate function and subcellular location of FtsY. Full-length FtsY is found primarily associated with the membrane, while cleaved protein is predominantly present in the cytoplasm.</text>
</comment>
<comment type="disruption phenotype">
    <text evidence="5 14">Deletion affects both cell morphology and protein export. Mutants are defective in the insertion into the cytoplasmic membrane of three topologically distinct membrane proteins, MalF, AcrB and FtsQ.</text>
</comment>
<comment type="similarity">
    <text evidence="1">Belongs to the GTP-binding SRP family. FtsY subfamily.</text>
</comment>